<proteinExistence type="evidence at protein level"/>
<feature type="chain" id="PRO_0000085992" description="Dual specificity mitogen-activated protein kinase kinase hemipterous">
    <location>
        <begin position="1"/>
        <end position="1178"/>
    </location>
</feature>
<feature type="domain" description="Protein kinase" evidence="2">
    <location>
        <begin position="197"/>
        <end position="456"/>
    </location>
</feature>
<feature type="region of interest" description="Disordered" evidence="4">
    <location>
        <begin position="74"/>
        <end position="103"/>
    </location>
</feature>
<feature type="region of interest" description="Disordered" evidence="4">
    <location>
        <begin position="115"/>
        <end position="148"/>
    </location>
</feature>
<feature type="region of interest" description="Disordered" evidence="4">
    <location>
        <begin position="522"/>
        <end position="648"/>
    </location>
</feature>
<feature type="region of interest" description="Disordered" evidence="4">
    <location>
        <begin position="715"/>
        <end position="783"/>
    </location>
</feature>
<feature type="region of interest" description="Disordered" evidence="4">
    <location>
        <begin position="797"/>
        <end position="851"/>
    </location>
</feature>
<feature type="region of interest" description="Disordered" evidence="4">
    <location>
        <begin position="912"/>
        <end position="933"/>
    </location>
</feature>
<feature type="region of interest" description="Disordered" evidence="4">
    <location>
        <begin position="999"/>
        <end position="1026"/>
    </location>
</feature>
<feature type="region of interest" description="Disordered" evidence="4">
    <location>
        <begin position="1042"/>
        <end position="1108"/>
    </location>
</feature>
<feature type="region of interest" description="Disordered" evidence="4">
    <location>
        <begin position="1122"/>
        <end position="1178"/>
    </location>
</feature>
<feature type="compositionally biased region" description="Low complexity" evidence="4">
    <location>
        <begin position="91"/>
        <end position="103"/>
    </location>
</feature>
<feature type="compositionally biased region" description="Low complexity" evidence="4">
    <location>
        <begin position="115"/>
        <end position="128"/>
    </location>
</feature>
<feature type="compositionally biased region" description="Polar residues" evidence="4">
    <location>
        <begin position="523"/>
        <end position="543"/>
    </location>
</feature>
<feature type="compositionally biased region" description="Low complexity" evidence="4">
    <location>
        <begin position="544"/>
        <end position="570"/>
    </location>
</feature>
<feature type="compositionally biased region" description="Gly residues" evidence="4">
    <location>
        <begin position="574"/>
        <end position="593"/>
    </location>
</feature>
<feature type="compositionally biased region" description="Low complexity" evidence="4">
    <location>
        <begin position="594"/>
        <end position="608"/>
    </location>
</feature>
<feature type="compositionally biased region" description="Basic and acidic residues" evidence="4">
    <location>
        <begin position="636"/>
        <end position="646"/>
    </location>
</feature>
<feature type="compositionally biased region" description="Polar residues" evidence="4">
    <location>
        <begin position="724"/>
        <end position="734"/>
    </location>
</feature>
<feature type="compositionally biased region" description="Low complexity" evidence="4">
    <location>
        <begin position="735"/>
        <end position="783"/>
    </location>
</feature>
<feature type="compositionally biased region" description="Low complexity" evidence="4">
    <location>
        <begin position="808"/>
        <end position="817"/>
    </location>
</feature>
<feature type="compositionally biased region" description="Low complexity" evidence="4">
    <location>
        <begin position="837"/>
        <end position="851"/>
    </location>
</feature>
<feature type="compositionally biased region" description="Polar residues" evidence="4">
    <location>
        <begin position="912"/>
        <end position="928"/>
    </location>
</feature>
<feature type="compositionally biased region" description="Low complexity" evidence="4">
    <location>
        <begin position="1042"/>
        <end position="1055"/>
    </location>
</feature>
<feature type="compositionally biased region" description="Basic and acidic residues" evidence="4">
    <location>
        <begin position="1168"/>
        <end position="1178"/>
    </location>
</feature>
<feature type="active site" description="Proton acceptor" evidence="2 3">
    <location>
        <position position="320"/>
    </location>
</feature>
<feature type="binding site" evidence="2">
    <location>
        <begin position="203"/>
        <end position="211"/>
    </location>
    <ligand>
        <name>ATP</name>
        <dbReference type="ChEBI" id="CHEBI:30616"/>
    </ligand>
</feature>
<feature type="binding site" evidence="2">
    <location>
        <position position="226"/>
    </location>
    <ligand>
        <name>ATP</name>
        <dbReference type="ChEBI" id="CHEBI:30616"/>
    </ligand>
</feature>
<feature type="modified residue" description="Phosphoserine" evidence="1">
    <location>
        <position position="348"/>
    </location>
</feature>
<feature type="modified residue" description="Phosphothreonine" evidence="1">
    <location>
        <position position="352"/>
    </location>
</feature>
<feature type="modified residue" description="Phosphoserine" evidence="5">
    <location>
        <position position="646"/>
    </location>
</feature>
<feature type="modified residue" description="Phosphoserine" evidence="5">
    <location>
        <position position="662"/>
    </location>
</feature>
<feature type="modified residue" description="Phosphoserine" evidence="5">
    <location>
        <position position="1150"/>
    </location>
</feature>
<feature type="modified residue" description="Phosphoserine" evidence="5">
    <location>
        <position position="1154"/>
    </location>
</feature>
<feature type="splice variant" id="VSP_015107" description="In isoform C." evidence="9 10">
    <original>ATAT</original>
    <variation>LPNS</variation>
    <location>
        <begin position="489"/>
        <end position="492"/>
    </location>
</feature>
<feature type="splice variant" id="VSP_015108" description="In isoform C." evidence="9 10">
    <location>
        <begin position="493"/>
        <end position="1178"/>
    </location>
</feature>
<feature type="sequence conflict" description="In Ref. 1; AAC46944." evidence="11" ref="1">
    <original>G</original>
    <variation>S</variation>
    <location>
        <position position="71"/>
    </location>
</feature>
<feature type="sequence conflict" description="In Ref. 1; AAC46944." evidence="11" ref="1">
    <original>PFGSA</original>
    <variation>LRSP</variation>
    <location>
        <begin position="93"/>
        <end position="97"/>
    </location>
</feature>
<feature type="sequence conflict" description="In Ref. 1; AAC46944." evidence="11" ref="1">
    <original>A</original>
    <variation>R</variation>
    <location>
        <position position="106"/>
    </location>
</feature>
<feature type="sequence conflict" description="In Ref. 1; AAC46944." evidence="11" ref="1">
    <original>A</original>
    <variation>R</variation>
    <location>
        <position position="110"/>
    </location>
</feature>
<feature type="sequence conflict" description="In Ref. 1; AAC46944." evidence="11" ref="1">
    <original>TFGG</original>
    <variation>LRW</variation>
    <location>
        <begin position="118"/>
        <end position="121"/>
    </location>
</feature>
<feature type="sequence conflict" description="In Ref. 1; AAC46944." evidence="11" ref="1">
    <original>GLNR</original>
    <variation>DVEC</variation>
    <location>
        <begin position="147"/>
        <end position="150"/>
    </location>
</feature>
<feature type="sequence conflict" description="In Ref. 1; AAC46944." evidence="11" ref="1">
    <original>RLRANGDPTLQRA</original>
    <variation>DCGQWRSNAPEVT</variation>
    <location>
        <begin position="477"/>
        <end position="489"/>
    </location>
</feature>
<feature type="sequence conflict" description="In Ref. 5; AAL48832." evidence="11" ref="5">
    <original>D</original>
    <variation>G</variation>
    <location>
        <position position="927"/>
    </location>
</feature>
<comment type="function">
    <text evidence="6 7 8">Required for the epithelial cell sheet movement called dorsal closure (DC), which allows establishment of the dorsal epidermis. Controls the expression in the dorsal epithelium edges of another dorsal closure gene, puckered (puc). Phosphorylates and activates the MAP kinase bsk; bsk signal transduction pathway mediates an immune response and morphogenesis.</text>
</comment>
<comment type="catalytic activity">
    <reaction>
        <text>L-seryl-[protein] + ATP = O-phospho-L-seryl-[protein] + ADP + H(+)</text>
        <dbReference type="Rhea" id="RHEA:17989"/>
        <dbReference type="Rhea" id="RHEA-COMP:9863"/>
        <dbReference type="Rhea" id="RHEA-COMP:11604"/>
        <dbReference type="ChEBI" id="CHEBI:15378"/>
        <dbReference type="ChEBI" id="CHEBI:29999"/>
        <dbReference type="ChEBI" id="CHEBI:30616"/>
        <dbReference type="ChEBI" id="CHEBI:83421"/>
        <dbReference type="ChEBI" id="CHEBI:456216"/>
        <dbReference type="EC" id="2.7.12.2"/>
    </reaction>
</comment>
<comment type="catalytic activity">
    <reaction>
        <text>L-threonyl-[protein] + ATP = O-phospho-L-threonyl-[protein] + ADP + H(+)</text>
        <dbReference type="Rhea" id="RHEA:46608"/>
        <dbReference type="Rhea" id="RHEA-COMP:11060"/>
        <dbReference type="Rhea" id="RHEA-COMP:11605"/>
        <dbReference type="ChEBI" id="CHEBI:15378"/>
        <dbReference type="ChEBI" id="CHEBI:30013"/>
        <dbReference type="ChEBI" id="CHEBI:30616"/>
        <dbReference type="ChEBI" id="CHEBI:61977"/>
        <dbReference type="ChEBI" id="CHEBI:456216"/>
        <dbReference type="EC" id="2.7.12.2"/>
    </reaction>
</comment>
<comment type="catalytic activity">
    <reaction>
        <text>L-tyrosyl-[protein] + ATP = O-phospho-L-tyrosyl-[protein] + ADP + H(+)</text>
        <dbReference type="Rhea" id="RHEA:10596"/>
        <dbReference type="Rhea" id="RHEA-COMP:10136"/>
        <dbReference type="Rhea" id="RHEA-COMP:20101"/>
        <dbReference type="ChEBI" id="CHEBI:15378"/>
        <dbReference type="ChEBI" id="CHEBI:30616"/>
        <dbReference type="ChEBI" id="CHEBI:46858"/>
        <dbReference type="ChEBI" id="CHEBI:61978"/>
        <dbReference type="ChEBI" id="CHEBI:456216"/>
        <dbReference type="EC" id="2.7.12.2"/>
    </reaction>
</comment>
<comment type="interaction">
    <interactant intactId="EBI-74214">
        <id>Q23977</id>
    </interactant>
    <interactant intactId="EBI-74120">
        <id>Q9W0K0</id>
        <label>Aplip1</label>
    </interactant>
    <organismsDiffer>false</organismsDiffer>
    <experiments>2</experiments>
</comment>
<comment type="alternative products">
    <event type="alternative splicing"/>
    <isoform>
        <id>Q23977-1</id>
        <name>A</name>
        <sequence type="displayed"/>
    </isoform>
    <isoform>
        <id>Q23977-3</id>
        <name>C</name>
        <sequence type="described" ref="VSP_015107 VSP_015108"/>
    </isoform>
</comment>
<comment type="PTM">
    <text evidence="1">MAPKK is itself dependent on Ser/Thr phosphorylation for activity catalyzed by MAP kinase kinase kinases.</text>
</comment>
<comment type="PTM">
    <text evidence="5">Weakly autophosphorylated.</text>
</comment>
<comment type="similarity">
    <text evidence="11">Belongs to the protein kinase superfamily. STE Ser/Thr protein kinase family. MAP kinase kinase subfamily.</text>
</comment>
<comment type="sequence caution" evidence="11">
    <conflict type="erroneous initiation">
        <sequence resource="EMBL-CDS" id="AAL48832"/>
    </conflict>
    <text>Truncated N-terminus.</text>
</comment>
<comment type="sequence caution" evidence="11">
    <conflict type="miscellaneous discrepancy">
        <sequence resource="EMBL-CDS" id="AAL48832"/>
    </conflict>
    <text>Intron retention.</text>
</comment>
<sequence length="1178" mass="125108">MSTIEFETIGSRLQSLEAKLQAQNESHDQIVLSGARGPVVSGSVPSARVPPLATSASAATSATHAPSLGAGSVSGSGISIAQRPAPPVPHATPFGSASASSSSSSASAFASAAPATGTFGGTYTPPTTRVSRATPTLPMLSSGPGGGLNRTRPVILPLPTPPHPPVSETDMKLKIIMEQTGKLNINGRQYPTDINDLKHLGDLGNGTSGNVVKMMHLSSNTIIAVKQMRRTGNAEENKRILMDLDVVLKSHDCKYIVKCLGCFVRDPDVWICMELMSMCFDKLLKLSKKPVPEQILGKVTVATVNALSYLKDKHGVIHRDVKPSNILIDERGNIKLCDFGISGRLVDSKANTRSAGCAAYMAPERIDPKKPKYDIRADVWSLGITLVELATARSPYEGCNTDFEVLTKVLDSEPPCLPYGEGYNFSQQFRDFVIKCLTKNHQDRPKYPELLAQPFIRIYESAKVDVPNWFQSIKDNRLRANGDPTLQRATATGSAIGSGAGSLAGSGSGSAGGAVKYGRATTYAGQSPTNPQKTIKPTQIPSYQQQQSQFFMQSATQLPQTTTTTPTATTNCFGGSGNGNGRGNGSGGSGNGSGSSSSASPLSPPSAGIGDLNRLYRKSPFMQRKLSNGSHHPHYKYNDESPKKESMFSSIGQSILRNLTTSPFSQKKHNSTATTIPLPHNNQTLITDAATAAAAAATATTPPNIAATVLTTTPTTTPTWRLPTENSQAYDSCDSSSNATTTTLNLGLSSPSPSLPRKQFPTESPTLQLTSQQQQQPQRLQPGNQSPIVLQRFYHQQNQLREKEAAERYQQQRQQPPVGVTSTNPFHSNYVPPPPSTHSTSSQSSTQSTCSQIAINPASISPSSGSGTGNMAGLGIGSAPASGLGAAGHFGAGGTGEQLQYQPLPIAAEATGTSPTLQSRSPEQQSDYGGNGNMVASKLSKLYARRQLLGQSSSSGASNSSLDGCSREQHDAGWFNTLAGAMKRQFATYVKTQLNSTATSPVASSMDRDQEPVHPQPPAYRSVVNNGSGGKSYYYRTLSAASSSSNTSQSTSPTTEPLPGGGTSSFLRRYASSGPGGSISTPPSPHILAGLDRRHRSPDPPPRYNRGQSPLLLRKNLLELSGQPPGSPLLHRRYVSASPPLPPPRRGSESVPGSPQHFRTRIHYTPEPQRRIYRTIDQ</sequence>
<accession>Q23977</accession>
<accession>O18411</accession>
<accession>Q8SZ04</accession>
<accession>Q8SZZ1</accession>
<accession>Q9I7S3</accession>
<name>HEP_DROME</name>
<dbReference type="EC" id="2.7.12.2"/>
<dbReference type="EMBL" id="U05240">
    <property type="protein sequence ID" value="AAC46944.1"/>
    <property type="molecule type" value="mRNA"/>
</dbReference>
<dbReference type="EMBL" id="U93032">
    <property type="protein sequence ID" value="AAB63449.1"/>
    <property type="molecule type" value="mRNA"/>
</dbReference>
<dbReference type="EMBL" id="AE014298">
    <property type="protein sequence ID" value="AAF48222.1"/>
    <property type="molecule type" value="Genomic_DNA"/>
</dbReference>
<dbReference type="EMBL" id="AE014298">
    <property type="protein sequence ID" value="AAN09646.1"/>
    <property type="molecule type" value="Genomic_DNA"/>
</dbReference>
<dbReference type="EMBL" id="AY069695">
    <property type="protein sequence ID" value="AAL39840.1"/>
    <property type="molecule type" value="mRNA"/>
</dbReference>
<dbReference type="EMBL" id="AY071210">
    <property type="protein sequence ID" value="AAL48832.1"/>
    <property type="status" value="ALT_SEQ"/>
    <property type="molecule type" value="mRNA"/>
</dbReference>
<dbReference type="RefSeq" id="NP_001259501.1">
    <molecule id="Q23977-3"/>
    <property type="nucleotide sequence ID" value="NM_001272572.2"/>
</dbReference>
<dbReference type="RefSeq" id="NP_511142.2">
    <molecule id="Q23977-3"/>
    <property type="nucleotide sequence ID" value="NM_078587.3"/>
</dbReference>
<dbReference type="RefSeq" id="NP_727661.1">
    <molecule id="Q23977-1"/>
    <property type="nucleotide sequence ID" value="NM_167346.2"/>
</dbReference>
<dbReference type="SMR" id="Q23977"/>
<dbReference type="BioGRID" id="58642">
    <property type="interactions" value="80"/>
</dbReference>
<dbReference type="DIP" id="DIP-30870N"/>
<dbReference type="FunCoup" id="Q23977">
    <property type="interactions" value="306"/>
</dbReference>
<dbReference type="IntAct" id="Q23977">
    <property type="interactions" value="3"/>
</dbReference>
<dbReference type="STRING" id="7227.FBpp0073578"/>
<dbReference type="GlyGen" id="Q23977">
    <property type="glycosylation" value="1 site"/>
</dbReference>
<dbReference type="iPTMnet" id="Q23977"/>
<dbReference type="PaxDb" id="7227-FBpp0073578"/>
<dbReference type="DNASU" id="32256"/>
<dbReference type="EnsemblMetazoa" id="FBtr0073747">
    <molecule id="Q23977-1"/>
    <property type="protein sequence ID" value="FBpp0073578"/>
    <property type="gene ID" value="FBgn0010303"/>
</dbReference>
<dbReference type="EnsemblMetazoa" id="FBtr0073748">
    <molecule id="Q23977-3"/>
    <property type="protein sequence ID" value="FBpp0073579"/>
    <property type="gene ID" value="FBgn0010303"/>
</dbReference>
<dbReference type="EnsemblMetazoa" id="FBtr0330397">
    <molecule id="Q23977-3"/>
    <property type="protein sequence ID" value="FBpp0303423"/>
    <property type="gene ID" value="FBgn0010303"/>
</dbReference>
<dbReference type="GeneID" id="32256"/>
<dbReference type="KEGG" id="dme:Dmel_CG4353"/>
<dbReference type="AGR" id="FB:FBgn0010303"/>
<dbReference type="CTD" id="32256"/>
<dbReference type="FlyBase" id="FBgn0010303">
    <property type="gene designation" value="hep"/>
</dbReference>
<dbReference type="VEuPathDB" id="VectorBase:FBgn0010303"/>
<dbReference type="eggNOG" id="KOG0983">
    <property type="taxonomic scope" value="Eukaryota"/>
</dbReference>
<dbReference type="InParanoid" id="Q23977"/>
<dbReference type="OMA" id="GCVTDFE"/>
<dbReference type="OrthoDB" id="10252354at2759"/>
<dbReference type="PhylomeDB" id="Q23977"/>
<dbReference type="BRENDA" id="2.7.12.2">
    <property type="organism ID" value="1994"/>
</dbReference>
<dbReference type="Reactome" id="R-DME-209397">
    <property type="pathway name" value="Formation of the cytosolic BSK 'scaffolding complex'"/>
</dbReference>
<dbReference type="Reactome" id="R-DME-209447">
    <property type="pathway name" value="Activation of the IkappaB kinase complex, KEY:IRD5 dimer:KEY"/>
</dbReference>
<dbReference type="Reactome" id="R-DME-350376">
    <property type="pathway name" value="Activation of RAC1:GTP by FZ:DSH complex"/>
</dbReference>
<dbReference type="SignaLink" id="Q23977"/>
<dbReference type="BioGRID-ORCS" id="32256">
    <property type="hits" value="0 hits in 3 CRISPR screens"/>
</dbReference>
<dbReference type="ChiTaRS" id="hep">
    <property type="organism name" value="fly"/>
</dbReference>
<dbReference type="GenomeRNAi" id="32256"/>
<dbReference type="PRO" id="PR:Q23977"/>
<dbReference type="Proteomes" id="UP000000803">
    <property type="component" value="Chromosome X"/>
</dbReference>
<dbReference type="Bgee" id="FBgn0010303">
    <property type="expression patterns" value="Expressed in hemocyte (sensu Nematoda and Protostomia) in body wall and 277 other cell types or tissues"/>
</dbReference>
<dbReference type="ExpressionAtlas" id="Q23977">
    <property type="expression patterns" value="baseline and differential"/>
</dbReference>
<dbReference type="GO" id="GO:0030424">
    <property type="term" value="C:axon"/>
    <property type="evidence" value="ECO:0000314"/>
    <property type="project" value="FlyBase"/>
</dbReference>
<dbReference type="GO" id="GO:0005829">
    <property type="term" value="C:cytosol"/>
    <property type="evidence" value="ECO:0000304"/>
    <property type="project" value="Reactome"/>
</dbReference>
<dbReference type="GO" id="GO:0005524">
    <property type="term" value="F:ATP binding"/>
    <property type="evidence" value="ECO:0007669"/>
    <property type="project" value="UniProtKB-KW"/>
</dbReference>
<dbReference type="GO" id="GO:0008545">
    <property type="term" value="F:JUN kinase kinase activity"/>
    <property type="evidence" value="ECO:0000314"/>
    <property type="project" value="FlyBase"/>
</dbReference>
<dbReference type="GO" id="GO:0004708">
    <property type="term" value="F:MAP kinase kinase activity"/>
    <property type="evidence" value="ECO:0000250"/>
    <property type="project" value="FlyBase"/>
</dbReference>
<dbReference type="GO" id="GO:0005078">
    <property type="term" value="F:MAP-kinase scaffold activity"/>
    <property type="evidence" value="ECO:0000314"/>
    <property type="project" value="UniProtKB"/>
</dbReference>
<dbReference type="GO" id="GO:0004672">
    <property type="term" value="F:protein kinase activity"/>
    <property type="evidence" value="ECO:0000314"/>
    <property type="project" value="FlyBase"/>
</dbReference>
<dbReference type="GO" id="GO:0019901">
    <property type="term" value="F:protein kinase binding"/>
    <property type="evidence" value="ECO:0000353"/>
    <property type="project" value="UniProtKB"/>
</dbReference>
<dbReference type="GO" id="GO:0106310">
    <property type="term" value="F:protein serine kinase activity"/>
    <property type="evidence" value="ECO:0007669"/>
    <property type="project" value="RHEA"/>
</dbReference>
<dbReference type="GO" id="GO:0004674">
    <property type="term" value="F:protein serine/threonine kinase activity"/>
    <property type="evidence" value="ECO:0007669"/>
    <property type="project" value="UniProtKB-KW"/>
</dbReference>
<dbReference type="GO" id="GO:0004712">
    <property type="term" value="F:protein serine/threonine/tyrosine kinase activity"/>
    <property type="evidence" value="ECO:0000304"/>
    <property type="project" value="Reactome"/>
</dbReference>
<dbReference type="GO" id="GO:0004713">
    <property type="term" value="F:protein tyrosine kinase activity"/>
    <property type="evidence" value="ECO:0007669"/>
    <property type="project" value="UniProtKB-KW"/>
</dbReference>
<dbReference type="GO" id="GO:0019731">
    <property type="term" value="P:antibacterial humoral response"/>
    <property type="evidence" value="ECO:0000314"/>
    <property type="project" value="FlyBase"/>
</dbReference>
<dbReference type="GO" id="GO:0048675">
    <property type="term" value="P:axon extension"/>
    <property type="evidence" value="ECO:0000315"/>
    <property type="project" value="FlyBase"/>
</dbReference>
<dbReference type="GO" id="GO:0007411">
    <property type="term" value="P:axon guidance"/>
    <property type="evidence" value="ECO:0000314"/>
    <property type="project" value="FlyBase"/>
</dbReference>
<dbReference type="GO" id="GO:0034769">
    <property type="term" value="P:basement membrane disassembly"/>
    <property type="evidence" value="ECO:0000315"/>
    <property type="project" value="FlyBase"/>
</dbReference>
<dbReference type="GO" id="GO:0033500">
    <property type="term" value="P:carbohydrate homeostasis"/>
    <property type="evidence" value="ECO:0000315"/>
    <property type="project" value="FlyBase"/>
</dbReference>
<dbReference type="GO" id="GO:0071243">
    <property type="term" value="P:cellular response to arsenic-containing substance"/>
    <property type="evidence" value="ECO:0000315"/>
    <property type="project" value="FlyBase"/>
</dbReference>
<dbReference type="GO" id="GO:0071276">
    <property type="term" value="P:cellular response to cadmium ion"/>
    <property type="evidence" value="ECO:0000315"/>
    <property type="project" value="FlyBase"/>
</dbReference>
<dbReference type="GO" id="GO:0046844">
    <property type="term" value="P:chorion micropyle formation"/>
    <property type="evidence" value="ECO:0000315"/>
    <property type="project" value="FlyBase"/>
</dbReference>
<dbReference type="GO" id="GO:0030381">
    <property type="term" value="P:chorion-containing eggshell pattern formation"/>
    <property type="evidence" value="ECO:0000315"/>
    <property type="project" value="FlyBase"/>
</dbReference>
<dbReference type="GO" id="GO:0008340">
    <property type="term" value="P:determination of adult lifespan"/>
    <property type="evidence" value="ECO:0000315"/>
    <property type="project" value="FlyBase"/>
</dbReference>
<dbReference type="GO" id="GO:0046843">
    <property type="term" value="P:dorsal appendage formation"/>
    <property type="evidence" value="ECO:0000315"/>
    <property type="project" value="FlyBase"/>
</dbReference>
<dbReference type="GO" id="GO:0007391">
    <property type="term" value="P:dorsal closure"/>
    <property type="evidence" value="ECO:0000315"/>
    <property type="project" value="UniProtKB"/>
</dbReference>
<dbReference type="GO" id="GO:0007395">
    <property type="term" value="P:dorsal closure, spreading of leading edge cells"/>
    <property type="evidence" value="ECO:0000315"/>
    <property type="project" value="FlyBase"/>
</dbReference>
<dbReference type="GO" id="GO:0043652">
    <property type="term" value="P:engulfment of apoptotic cell"/>
    <property type="evidence" value="ECO:0000315"/>
    <property type="project" value="FlyBase"/>
</dbReference>
<dbReference type="GO" id="GO:0030707">
    <property type="term" value="P:follicle cell of egg chamber development"/>
    <property type="evidence" value="ECO:0000315"/>
    <property type="project" value="FlyBase"/>
</dbReference>
<dbReference type="GO" id="GO:0007561">
    <property type="term" value="P:imaginal disc eversion"/>
    <property type="evidence" value="ECO:0000315"/>
    <property type="project" value="FlyBase"/>
</dbReference>
<dbReference type="GO" id="GO:0046528">
    <property type="term" value="P:imaginal disc fusion"/>
    <property type="evidence" value="ECO:0000315"/>
    <property type="project" value="FlyBase"/>
</dbReference>
<dbReference type="GO" id="GO:0046529">
    <property type="term" value="P:imaginal disc fusion, thorax closure"/>
    <property type="evidence" value="ECO:0000315"/>
    <property type="project" value="FlyBase"/>
</dbReference>
<dbReference type="GO" id="GO:0048803">
    <property type="term" value="P:imaginal disc-derived male genitalia morphogenesis"/>
    <property type="evidence" value="ECO:0000315"/>
    <property type="project" value="UniProtKB"/>
</dbReference>
<dbReference type="GO" id="GO:0036335">
    <property type="term" value="P:intestinal stem cell homeostasis"/>
    <property type="evidence" value="ECO:0000315"/>
    <property type="project" value="FlyBase"/>
</dbReference>
<dbReference type="GO" id="GO:0007254">
    <property type="term" value="P:JNK cascade"/>
    <property type="evidence" value="ECO:0000314"/>
    <property type="project" value="FlyBase"/>
</dbReference>
<dbReference type="GO" id="GO:0035006">
    <property type="term" value="P:melanization defense response"/>
    <property type="evidence" value="ECO:0000315"/>
    <property type="project" value="FlyBase"/>
</dbReference>
<dbReference type="GO" id="GO:0048666">
    <property type="term" value="P:neuron development"/>
    <property type="evidence" value="ECO:0000315"/>
    <property type="project" value="FlyBase"/>
</dbReference>
<dbReference type="GO" id="GO:0061057">
    <property type="term" value="P:peptidoglycan recognition protein signaling pathway"/>
    <property type="evidence" value="ECO:0000315"/>
    <property type="project" value="FlyBase"/>
</dbReference>
<dbReference type="GO" id="GO:0032233">
    <property type="term" value="P:positive regulation of actin filament bundle assembly"/>
    <property type="evidence" value="ECO:0000315"/>
    <property type="project" value="FlyBase"/>
</dbReference>
<dbReference type="GO" id="GO:0010508">
    <property type="term" value="P:positive regulation of autophagy"/>
    <property type="evidence" value="ECO:0000315"/>
    <property type="project" value="FlyBase"/>
</dbReference>
<dbReference type="GO" id="GO:1903688">
    <property type="term" value="P:positive regulation of border follicle cell migration"/>
    <property type="evidence" value="ECO:0000316"/>
    <property type="project" value="FlyBase"/>
</dbReference>
<dbReference type="GO" id="GO:0045893">
    <property type="term" value="P:positive regulation of DNA-templated transcription"/>
    <property type="evidence" value="ECO:0000315"/>
    <property type="project" value="FlyBase"/>
</dbReference>
<dbReference type="GO" id="GO:0051491">
    <property type="term" value="P:positive regulation of filopodium assembly"/>
    <property type="evidence" value="ECO:0000315"/>
    <property type="project" value="FlyBase"/>
</dbReference>
<dbReference type="GO" id="GO:0010628">
    <property type="term" value="P:positive regulation of gene expression"/>
    <property type="evidence" value="ECO:0000315"/>
    <property type="project" value="UniProtKB"/>
</dbReference>
<dbReference type="GO" id="GO:0010592">
    <property type="term" value="P:positive regulation of lamellipodium assembly"/>
    <property type="evidence" value="ECO:0000315"/>
    <property type="project" value="FlyBase"/>
</dbReference>
<dbReference type="GO" id="GO:0043068">
    <property type="term" value="P:positive regulation of programmed cell death"/>
    <property type="evidence" value="ECO:0000315"/>
    <property type="project" value="FlyBase"/>
</dbReference>
<dbReference type="GO" id="GO:0009408">
    <property type="term" value="P:response to heat"/>
    <property type="evidence" value="ECO:0000315"/>
    <property type="project" value="FlyBase"/>
</dbReference>
<dbReference type="GO" id="GO:0070328">
    <property type="term" value="P:triglyceride homeostasis"/>
    <property type="evidence" value="ECO:0000315"/>
    <property type="project" value="FlyBase"/>
</dbReference>
<dbReference type="GO" id="GO:0033209">
    <property type="term" value="P:tumor necrosis factor-mediated signaling pathway"/>
    <property type="evidence" value="ECO:0000315"/>
    <property type="project" value="FlyBase"/>
</dbReference>
<dbReference type="GO" id="GO:0048010">
    <property type="term" value="P:vascular endothelial growth factor receptor signaling pathway"/>
    <property type="evidence" value="ECO:0000316"/>
    <property type="project" value="FlyBase"/>
</dbReference>
<dbReference type="GO" id="GO:0042060">
    <property type="term" value="P:wound healing"/>
    <property type="evidence" value="ECO:0000315"/>
    <property type="project" value="FlyBase"/>
</dbReference>
<dbReference type="CDD" id="cd06618">
    <property type="entry name" value="PKc_MKK7"/>
    <property type="match status" value="1"/>
</dbReference>
<dbReference type="FunFam" id="3.30.200.20:FF:000040">
    <property type="entry name" value="Dual specificity mitogen-activated protein kinase kinase"/>
    <property type="match status" value="1"/>
</dbReference>
<dbReference type="FunFam" id="1.10.510.10:FF:000623">
    <property type="entry name" value="Dual specificity mitogen-activated protein kinase kinase hemipterous"/>
    <property type="match status" value="1"/>
</dbReference>
<dbReference type="Gene3D" id="3.30.200.20">
    <property type="entry name" value="Phosphorylase Kinase, domain 1"/>
    <property type="match status" value="1"/>
</dbReference>
<dbReference type="Gene3D" id="1.10.510.10">
    <property type="entry name" value="Transferase(Phosphotransferase) domain 1"/>
    <property type="match status" value="1"/>
</dbReference>
<dbReference type="InterPro" id="IPR052468">
    <property type="entry name" value="Dual_spec_MAPK_kinase"/>
</dbReference>
<dbReference type="InterPro" id="IPR011009">
    <property type="entry name" value="Kinase-like_dom_sf"/>
</dbReference>
<dbReference type="InterPro" id="IPR000719">
    <property type="entry name" value="Prot_kinase_dom"/>
</dbReference>
<dbReference type="InterPro" id="IPR017441">
    <property type="entry name" value="Protein_kinase_ATP_BS"/>
</dbReference>
<dbReference type="InterPro" id="IPR008271">
    <property type="entry name" value="Ser/Thr_kinase_AS"/>
</dbReference>
<dbReference type="PANTHER" id="PTHR47238:SF2">
    <property type="entry name" value="DUAL SPECIFICITY MITOGEN-ACTIVATED PROTEIN KINASE KINASE HEMIPTEROUS"/>
    <property type="match status" value="1"/>
</dbReference>
<dbReference type="PANTHER" id="PTHR47238">
    <property type="entry name" value="MITOGEN-ACTIVATED PROTEIN KINASE KINASE 5"/>
    <property type="match status" value="1"/>
</dbReference>
<dbReference type="Pfam" id="PF00069">
    <property type="entry name" value="Pkinase"/>
    <property type="match status" value="1"/>
</dbReference>
<dbReference type="SMART" id="SM00220">
    <property type="entry name" value="S_TKc"/>
    <property type="match status" value="1"/>
</dbReference>
<dbReference type="SUPFAM" id="SSF56112">
    <property type="entry name" value="Protein kinase-like (PK-like)"/>
    <property type="match status" value="1"/>
</dbReference>
<dbReference type="PROSITE" id="PS00107">
    <property type="entry name" value="PROTEIN_KINASE_ATP"/>
    <property type="match status" value="1"/>
</dbReference>
<dbReference type="PROSITE" id="PS50011">
    <property type="entry name" value="PROTEIN_KINASE_DOM"/>
    <property type="match status" value="1"/>
</dbReference>
<dbReference type="PROSITE" id="PS00108">
    <property type="entry name" value="PROTEIN_KINASE_ST"/>
    <property type="match status" value="1"/>
</dbReference>
<protein>
    <recommendedName>
        <fullName>Dual specificity mitogen-activated protein kinase kinase hemipterous</fullName>
        <shortName>MAPKK</shortName>
        <ecNumber>2.7.12.2</ecNumber>
    </recommendedName>
</protein>
<reference key="1">
    <citation type="journal article" date="1995" name="Cell">
        <title>Hemipterous encodes a novel Drosophila MAP kinase kinase, required for epithelial cell sheet movement.</title>
        <authorList>
            <person name="Glise B."/>
            <person name="Bourbon H."/>
            <person name="Noselli S."/>
        </authorList>
    </citation>
    <scope>NUCLEOTIDE SEQUENCE [MRNA] (ISOFORM C)</scope>
    <scope>FUNCTION</scope>
    <source>
        <strain>Oregon-R</strain>
    </source>
</reference>
<reference key="2">
    <citation type="journal article" date="1997" name="Proc. Natl. Acad. Sci. U.S.A.">
        <title>Mitogen-activated protein kinase kinase 7 is an activator of the c-Jun NH2-terminal kinase.</title>
        <authorList>
            <person name="Tournier C."/>
            <person name="Whitmarsh A.J."/>
            <person name="Cavanagh J."/>
            <person name="Barrett T."/>
            <person name="Davis R.J."/>
        </authorList>
    </citation>
    <scope>NUCLEOTIDE SEQUENCE [MRNA] (ISOFORM C)</scope>
    <scope>FUNCTION</scope>
</reference>
<reference key="3">
    <citation type="journal article" date="2000" name="Science">
        <title>The genome sequence of Drosophila melanogaster.</title>
        <authorList>
            <person name="Adams M.D."/>
            <person name="Celniker S.E."/>
            <person name="Holt R.A."/>
            <person name="Evans C.A."/>
            <person name="Gocayne J.D."/>
            <person name="Amanatides P.G."/>
            <person name="Scherer S.E."/>
            <person name="Li P.W."/>
            <person name="Hoskins R.A."/>
            <person name="Galle R.F."/>
            <person name="George R.A."/>
            <person name="Lewis S.E."/>
            <person name="Richards S."/>
            <person name="Ashburner M."/>
            <person name="Henderson S.N."/>
            <person name="Sutton G.G."/>
            <person name="Wortman J.R."/>
            <person name="Yandell M.D."/>
            <person name="Zhang Q."/>
            <person name="Chen L.X."/>
            <person name="Brandon R.C."/>
            <person name="Rogers Y.-H.C."/>
            <person name="Blazej R.G."/>
            <person name="Champe M."/>
            <person name="Pfeiffer B.D."/>
            <person name="Wan K.H."/>
            <person name="Doyle C."/>
            <person name="Baxter E.G."/>
            <person name="Helt G."/>
            <person name="Nelson C.R."/>
            <person name="Miklos G.L.G."/>
            <person name="Abril J.F."/>
            <person name="Agbayani A."/>
            <person name="An H.-J."/>
            <person name="Andrews-Pfannkoch C."/>
            <person name="Baldwin D."/>
            <person name="Ballew R.M."/>
            <person name="Basu A."/>
            <person name="Baxendale J."/>
            <person name="Bayraktaroglu L."/>
            <person name="Beasley E.M."/>
            <person name="Beeson K.Y."/>
            <person name="Benos P.V."/>
            <person name="Berman B.P."/>
            <person name="Bhandari D."/>
            <person name="Bolshakov S."/>
            <person name="Borkova D."/>
            <person name="Botchan M.R."/>
            <person name="Bouck J."/>
            <person name="Brokstein P."/>
            <person name="Brottier P."/>
            <person name="Burtis K.C."/>
            <person name="Busam D.A."/>
            <person name="Butler H."/>
            <person name="Cadieu E."/>
            <person name="Center A."/>
            <person name="Chandra I."/>
            <person name="Cherry J.M."/>
            <person name="Cawley S."/>
            <person name="Dahlke C."/>
            <person name="Davenport L.B."/>
            <person name="Davies P."/>
            <person name="de Pablos B."/>
            <person name="Delcher A."/>
            <person name="Deng Z."/>
            <person name="Mays A.D."/>
            <person name="Dew I."/>
            <person name="Dietz S.M."/>
            <person name="Dodson K."/>
            <person name="Doup L.E."/>
            <person name="Downes M."/>
            <person name="Dugan-Rocha S."/>
            <person name="Dunkov B.C."/>
            <person name="Dunn P."/>
            <person name="Durbin K.J."/>
            <person name="Evangelista C.C."/>
            <person name="Ferraz C."/>
            <person name="Ferriera S."/>
            <person name="Fleischmann W."/>
            <person name="Fosler C."/>
            <person name="Gabrielian A.E."/>
            <person name="Garg N.S."/>
            <person name="Gelbart W.M."/>
            <person name="Glasser K."/>
            <person name="Glodek A."/>
            <person name="Gong F."/>
            <person name="Gorrell J.H."/>
            <person name="Gu Z."/>
            <person name="Guan P."/>
            <person name="Harris M."/>
            <person name="Harris N.L."/>
            <person name="Harvey D.A."/>
            <person name="Heiman T.J."/>
            <person name="Hernandez J.R."/>
            <person name="Houck J."/>
            <person name="Hostin D."/>
            <person name="Houston K.A."/>
            <person name="Howland T.J."/>
            <person name="Wei M.-H."/>
            <person name="Ibegwam C."/>
            <person name="Jalali M."/>
            <person name="Kalush F."/>
            <person name="Karpen G.H."/>
            <person name="Ke Z."/>
            <person name="Kennison J.A."/>
            <person name="Ketchum K.A."/>
            <person name="Kimmel B.E."/>
            <person name="Kodira C.D."/>
            <person name="Kraft C.L."/>
            <person name="Kravitz S."/>
            <person name="Kulp D."/>
            <person name="Lai Z."/>
            <person name="Lasko P."/>
            <person name="Lei Y."/>
            <person name="Levitsky A.A."/>
            <person name="Li J.H."/>
            <person name="Li Z."/>
            <person name="Liang Y."/>
            <person name="Lin X."/>
            <person name="Liu X."/>
            <person name="Mattei B."/>
            <person name="McIntosh T.C."/>
            <person name="McLeod M.P."/>
            <person name="McPherson D."/>
            <person name="Merkulov G."/>
            <person name="Milshina N.V."/>
            <person name="Mobarry C."/>
            <person name="Morris J."/>
            <person name="Moshrefi A."/>
            <person name="Mount S.M."/>
            <person name="Moy M."/>
            <person name="Murphy B."/>
            <person name="Murphy L."/>
            <person name="Muzny D.M."/>
            <person name="Nelson D.L."/>
            <person name="Nelson D.R."/>
            <person name="Nelson K.A."/>
            <person name="Nixon K."/>
            <person name="Nusskern D.R."/>
            <person name="Pacleb J.M."/>
            <person name="Palazzolo M."/>
            <person name="Pittman G.S."/>
            <person name="Pan S."/>
            <person name="Pollard J."/>
            <person name="Puri V."/>
            <person name="Reese M.G."/>
            <person name="Reinert K."/>
            <person name="Remington K."/>
            <person name="Saunders R.D.C."/>
            <person name="Scheeler F."/>
            <person name="Shen H."/>
            <person name="Shue B.C."/>
            <person name="Siden-Kiamos I."/>
            <person name="Simpson M."/>
            <person name="Skupski M.P."/>
            <person name="Smith T.J."/>
            <person name="Spier E."/>
            <person name="Spradling A.C."/>
            <person name="Stapleton M."/>
            <person name="Strong R."/>
            <person name="Sun E."/>
            <person name="Svirskas R."/>
            <person name="Tector C."/>
            <person name="Turner R."/>
            <person name="Venter E."/>
            <person name="Wang A.H."/>
            <person name="Wang X."/>
            <person name="Wang Z.-Y."/>
            <person name="Wassarman D.A."/>
            <person name="Weinstock G.M."/>
            <person name="Weissenbach J."/>
            <person name="Williams S.M."/>
            <person name="Woodage T."/>
            <person name="Worley K.C."/>
            <person name="Wu D."/>
            <person name="Yang S."/>
            <person name="Yao Q.A."/>
            <person name="Ye J."/>
            <person name="Yeh R.-F."/>
            <person name="Zaveri J.S."/>
            <person name="Zhan M."/>
            <person name="Zhang G."/>
            <person name="Zhao Q."/>
            <person name="Zheng L."/>
            <person name="Zheng X.H."/>
            <person name="Zhong F.N."/>
            <person name="Zhong W."/>
            <person name="Zhou X."/>
            <person name="Zhu S.C."/>
            <person name="Zhu X."/>
            <person name="Smith H.O."/>
            <person name="Gibbs R.A."/>
            <person name="Myers E.W."/>
            <person name="Rubin G.M."/>
            <person name="Venter J.C."/>
        </authorList>
    </citation>
    <scope>NUCLEOTIDE SEQUENCE [LARGE SCALE GENOMIC DNA]</scope>
    <source>
        <strain>Berkeley</strain>
    </source>
</reference>
<reference key="4">
    <citation type="journal article" date="2002" name="Genome Biol.">
        <title>Annotation of the Drosophila melanogaster euchromatic genome: a systematic review.</title>
        <authorList>
            <person name="Misra S."/>
            <person name="Crosby M.A."/>
            <person name="Mungall C.J."/>
            <person name="Matthews B.B."/>
            <person name="Campbell K.S."/>
            <person name="Hradecky P."/>
            <person name="Huang Y."/>
            <person name="Kaminker J.S."/>
            <person name="Millburn G.H."/>
            <person name="Prochnik S.E."/>
            <person name="Smith C.D."/>
            <person name="Tupy J.L."/>
            <person name="Whitfield E.J."/>
            <person name="Bayraktaroglu L."/>
            <person name="Berman B.P."/>
            <person name="Bettencourt B.R."/>
            <person name="Celniker S.E."/>
            <person name="de Grey A.D.N.J."/>
            <person name="Drysdale R.A."/>
            <person name="Harris N.L."/>
            <person name="Richter J."/>
            <person name="Russo S."/>
            <person name="Schroeder A.J."/>
            <person name="Shu S.Q."/>
            <person name="Stapleton M."/>
            <person name="Yamada C."/>
            <person name="Ashburner M."/>
            <person name="Gelbart W.M."/>
            <person name="Rubin G.M."/>
            <person name="Lewis S.E."/>
        </authorList>
    </citation>
    <scope>GENOME REANNOTATION</scope>
    <scope>ALTERNATIVE SPLICING</scope>
    <source>
        <strain>Berkeley</strain>
    </source>
</reference>
<reference key="5">
    <citation type="journal article" date="2002" name="Genome Biol.">
        <title>A Drosophila full-length cDNA resource.</title>
        <authorList>
            <person name="Stapleton M."/>
            <person name="Carlson J.W."/>
            <person name="Brokstein P."/>
            <person name="Yu C."/>
            <person name="Champe M."/>
            <person name="George R.A."/>
            <person name="Guarin H."/>
            <person name="Kronmiller B."/>
            <person name="Pacleb J.M."/>
            <person name="Park S."/>
            <person name="Wan K.H."/>
            <person name="Rubin G.M."/>
            <person name="Celniker S.E."/>
        </authorList>
    </citation>
    <scope>NUCLEOTIDE SEQUENCE [LARGE SCALE MRNA] (ISOFORM A)</scope>
    <source>
        <strain>Berkeley</strain>
        <tissue>Embryo</tissue>
    </source>
</reference>
<reference key="6">
    <citation type="journal article" date="1996" name="Genes Dev.">
        <title>A JNK signal transduction pathway that mediates morphogenesis and an immune response in Drosophila.</title>
        <authorList>
            <person name="Sluss H.K."/>
            <person name="Han Z."/>
            <person name="Barrett T."/>
            <person name="Davis R.J."/>
            <person name="Ip Y.T."/>
        </authorList>
    </citation>
    <scope>FUNCTION</scope>
</reference>
<reference key="7">
    <citation type="journal article" date="2008" name="J. Proteome Res.">
        <title>Phosphoproteome analysis of Drosophila melanogaster embryos.</title>
        <authorList>
            <person name="Zhai B."/>
            <person name="Villen J."/>
            <person name="Beausoleil S.A."/>
            <person name="Mintseris J."/>
            <person name="Gygi S.P."/>
        </authorList>
    </citation>
    <scope>PHOSPHORYLATION [LARGE SCALE ANALYSIS] AT SER-646; SER-662; SER-1150 AND SER-1154</scope>
    <scope>IDENTIFICATION BY MASS SPECTROMETRY</scope>
    <source>
        <tissue>Embryo</tissue>
    </source>
</reference>
<evidence type="ECO:0000250" key="1"/>
<evidence type="ECO:0000255" key="2">
    <source>
        <dbReference type="PROSITE-ProRule" id="PRU00159"/>
    </source>
</evidence>
<evidence type="ECO:0000255" key="3">
    <source>
        <dbReference type="PROSITE-ProRule" id="PRU10027"/>
    </source>
</evidence>
<evidence type="ECO:0000256" key="4">
    <source>
        <dbReference type="SAM" id="MobiDB-lite"/>
    </source>
</evidence>
<evidence type="ECO:0000269" key="5">
    <source>
    </source>
</evidence>
<evidence type="ECO:0000269" key="6">
    <source>
    </source>
</evidence>
<evidence type="ECO:0000269" key="7">
    <source>
    </source>
</evidence>
<evidence type="ECO:0000269" key="8">
    <source>
    </source>
</evidence>
<evidence type="ECO:0000303" key="9">
    <source>
    </source>
</evidence>
<evidence type="ECO:0000303" key="10">
    <source>
    </source>
</evidence>
<evidence type="ECO:0000305" key="11"/>
<keyword id="KW-0025">Alternative splicing</keyword>
<keyword id="KW-0067">ATP-binding</keyword>
<keyword id="KW-0217">Developmental protein</keyword>
<keyword id="KW-0418">Kinase</keyword>
<keyword id="KW-0547">Nucleotide-binding</keyword>
<keyword id="KW-0597">Phosphoprotein</keyword>
<keyword id="KW-1185">Reference proteome</keyword>
<keyword id="KW-0723">Serine/threonine-protein kinase</keyword>
<keyword id="KW-0808">Transferase</keyword>
<keyword id="KW-0829">Tyrosine-protein kinase</keyword>
<organism>
    <name type="scientific">Drosophila melanogaster</name>
    <name type="common">Fruit fly</name>
    <dbReference type="NCBI Taxonomy" id="7227"/>
    <lineage>
        <taxon>Eukaryota</taxon>
        <taxon>Metazoa</taxon>
        <taxon>Ecdysozoa</taxon>
        <taxon>Arthropoda</taxon>
        <taxon>Hexapoda</taxon>
        <taxon>Insecta</taxon>
        <taxon>Pterygota</taxon>
        <taxon>Neoptera</taxon>
        <taxon>Endopterygota</taxon>
        <taxon>Diptera</taxon>
        <taxon>Brachycera</taxon>
        <taxon>Muscomorpha</taxon>
        <taxon>Ephydroidea</taxon>
        <taxon>Drosophilidae</taxon>
        <taxon>Drosophila</taxon>
        <taxon>Sophophora</taxon>
    </lineage>
</organism>
<gene>
    <name type="primary">hep</name>
    <name type="synonym">hem</name>
    <name type="synonym">MKK7</name>
    <name type="ORF">CG4353</name>
</gene>